<proteinExistence type="inferred from homology"/>
<sequence length="188" mass="20251">MQLVVARIGRAHGIKGEVTVEVRTDEPELRLGPGAVLATDPASTGPLTIESGRVHSGRLLLRFAGVHDRTGAEALRNTLLIADVDPDERPEDEDEYYDHQLIDLDVVTEDGTEVGRITEISHLPTQDLFVVERPDGSEVYVPFVSEIVTGIDLDAQRAVIDPPPGLIDDRAEIASARDAGAEDAGDEA</sequence>
<keyword id="KW-0143">Chaperone</keyword>
<keyword id="KW-0963">Cytoplasm</keyword>
<keyword id="KW-0690">Ribosome biogenesis</keyword>
<keyword id="KW-0698">rRNA processing</keyword>
<gene>
    <name evidence="1" type="primary">rimM</name>
</gene>
<evidence type="ECO:0000255" key="1">
    <source>
        <dbReference type="HAMAP-Rule" id="MF_00014"/>
    </source>
</evidence>
<protein>
    <recommendedName>
        <fullName evidence="1">Ribosome maturation factor RimM</fullName>
    </recommendedName>
</protein>
<dbReference type="EMBL" id="Z86111">
    <property type="protein sequence ID" value="CAB06806.1"/>
    <property type="molecule type" value="Genomic_DNA"/>
</dbReference>
<dbReference type="SMR" id="P0A4D4"/>
<dbReference type="GO" id="GO:0005737">
    <property type="term" value="C:cytoplasm"/>
    <property type="evidence" value="ECO:0007669"/>
    <property type="project" value="UniProtKB-SubCell"/>
</dbReference>
<dbReference type="GO" id="GO:0005840">
    <property type="term" value="C:ribosome"/>
    <property type="evidence" value="ECO:0007669"/>
    <property type="project" value="InterPro"/>
</dbReference>
<dbReference type="GO" id="GO:0043022">
    <property type="term" value="F:ribosome binding"/>
    <property type="evidence" value="ECO:0007669"/>
    <property type="project" value="InterPro"/>
</dbReference>
<dbReference type="GO" id="GO:0042274">
    <property type="term" value="P:ribosomal small subunit biogenesis"/>
    <property type="evidence" value="ECO:0007669"/>
    <property type="project" value="UniProtKB-UniRule"/>
</dbReference>
<dbReference type="GO" id="GO:0006364">
    <property type="term" value="P:rRNA processing"/>
    <property type="evidence" value="ECO:0007669"/>
    <property type="project" value="UniProtKB-UniRule"/>
</dbReference>
<dbReference type="Gene3D" id="2.30.30.240">
    <property type="entry name" value="PRC-barrel domain"/>
    <property type="match status" value="1"/>
</dbReference>
<dbReference type="Gene3D" id="2.40.30.60">
    <property type="entry name" value="RimM"/>
    <property type="match status" value="1"/>
</dbReference>
<dbReference type="HAMAP" id="MF_00014">
    <property type="entry name" value="Ribosome_mat_RimM"/>
    <property type="match status" value="1"/>
</dbReference>
<dbReference type="InterPro" id="IPR011033">
    <property type="entry name" value="PRC_barrel-like_sf"/>
</dbReference>
<dbReference type="InterPro" id="IPR056792">
    <property type="entry name" value="PRC_RimM"/>
</dbReference>
<dbReference type="InterPro" id="IPR011961">
    <property type="entry name" value="RimM"/>
</dbReference>
<dbReference type="InterPro" id="IPR002676">
    <property type="entry name" value="RimM_N"/>
</dbReference>
<dbReference type="InterPro" id="IPR036976">
    <property type="entry name" value="RimM_N_sf"/>
</dbReference>
<dbReference type="InterPro" id="IPR009000">
    <property type="entry name" value="Transl_B-barrel_sf"/>
</dbReference>
<dbReference type="NCBIfam" id="TIGR02273">
    <property type="entry name" value="16S_RimM"/>
    <property type="match status" value="1"/>
</dbReference>
<dbReference type="PANTHER" id="PTHR33692">
    <property type="entry name" value="RIBOSOME MATURATION FACTOR RIMM"/>
    <property type="match status" value="1"/>
</dbReference>
<dbReference type="PANTHER" id="PTHR33692:SF1">
    <property type="entry name" value="RIBOSOME MATURATION FACTOR RIMM"/>
    <property type="match status" value="1"/>
</dbReference>
<dbReference type="Pfam" id="PF24986">
    <property type="entry name" value="PRC_RimM"/>
    <property type="match status" value="1"/>
</dbReference>
<dbReference type="Pfam" id="PF01782">
    <property type="entry name" value="RimM"/>
    <property type="match status" value="1"/>
</dbReference>
<dbReference type="SUPFAM" id="SSF50346">
    <property type="entry name" value="PRC-barrel domain"/>
    <property type="match status" value="1"/>
</dbReference>
<dbReference type="SUPFAM" id="SSF50447">
    <property type="entry name" value="Translation proteins"/>
    <property type="match status" value="1"/>
</dbReference>
<reference key="1">
    <citation type="submission" date="1997-02" db="EMBL/GenBank/DDBJ databases">
        <authorList>
            <person name="Parro V."/>
            <person name="Mellado R.P."/>
        </authorList>
    </citation>
    <scope>NUCLEOTIDE SEQUENCE [GENOMIC DNA]</scope>
    <source>
        <strain>TK21</strain>
    </source>
</reference>
<feature type="chain" id="PRO_0000163363" description="Ribosome maturation factor RimM">
    <location>
        <begin position="1"/>
        <end position="188"/>
    </location>
</feature>
<feature type="domain" description="PRC barrel" evidence="1">
    <location>
        <begin position="93"/>
        <end position="166"/>
    </location>
</feature>
<accession>P0A4D4</accession>
<accession>O69881</accession>
<name>RIMM_STRLI</name>
<organism>
    <name type="scientific">Streptomyces lividans</name>
    <dbReference type="NCBI Taxonomy" id="1916"/>
    <lineage>
        <taxon>Bacteria</taxon>
        <taxon>Bacillati</taxon>
        <taxon>Actinomycetota</taxon>
        <taxon>Actinomycetes</taxon>
        <taxon>Kitasatosporales</taxon>
        <taxon>Streptomycetaceae</taxon>
        <taxon>Streptomyces</taxon>
    </lineage>
</organism>
<comment type="function">
    <text evidence="1">An accessory protein needed during the final step in the assembly of 30S ribosomal subunit, possibly for assembly of the head region. Essential for efficient processing of 16S rRNA. May be needed both before and after RbfA during the maturation of 16S rRNA. It has affinity for free ribosomal 30S subunits but not for 70S ribosomes.</text>
</comment>
<comment type="subunit">
    <text evidence="1">Binds ribosomal protein uS19.</text>
</comment>
<comment type="subcellular location">
    <subcellularLocation>
        <location evidence="1">Cytoplasm</location>
    </subcellularLocation>
</comment>
<comment type="domain">
    <text evidence="1">The PRC barrel domain binds ribosomal protein uS19.</text>
</comment>
<comment type="similarity">
    <text evidence="1">Belongs to the RimM family.</text>
</comment>